<keyword id="KW-0963">Cytoplasm</keyword>
<keyword id="KW-0210">Decarboxylase</keyword>
<keyword id="KW-0456">Lyase</keyword>
<keyword id="KW-0627">Porphyrin biosynthesis</keyword>
<keyword id="KW-1185">Reference proteome</keyword>
<organism>
    <name type="scientific">Herminiimonas arsenicoxydans</name>
    <dbReference type="NCBI Taxonomy" id="204773"/>
    <lineage>
        <taxon>Bacteria</taxon>
        <taxon>Pseudomonadati</taxon>
        <taxon>Pseudomonadota</taxon>
        <taxon>Betaproteobacteria</taxon>
        <taxon>Burkholderiales</taxon>
        <taxon>Oxalobacteraceae</taxon>
        <taxon>Herminiimonas</taxon>
    </lineage>
</organism>
<proteinExistence type="inferred from homology"/>
<protein>
    <recommendedName>
        <fullName evidence="1">Uroporphyrinogen decarboxylase</fullName>
        <shortName evidence="1">UPD</shortName>
        <shortName evidence="1">URO-D</shortName>
        <ecNumber evidence="1">4.1.1.37</ecNumber>
    </recommendedName>
</protein>
<name>DCUP_HERAR</name>
<dbReference type="EC" id="4.1.1.37" evidence="1"/>
<dbReference type="EMBL" id="CU207211">
    <property type="protein sequence ID" value="CAL63487.1"/>
    <property type="molecule type" value="Genomic_DNA"/>
</dbReference>
<dbReference type="SMR" id="A4GAF0"/>
<dbReference type="STRING" id="204773.HEAR3386"/>
<dbReference type="KEGG" id="har:HEAR3386"/>
<dbReference type="eggNOG" id="COG0407">
    <property type="taxonomic scope" value="Bacteria"/>
</dbReference>
<dbReference type="HOGENOM" id="CLU_040933_0_0_4"/>
<dbReference type="OrthoDB" id="9806656at2"/>
<dbReference type="UniPathway" id="UPA00251">
    <property type="reaction ID" value="UER00321"/>
</dbReference>
<dbReference type="Proteomes" id="UP000006697">
    <property type="component" value="Chromosome"/>
</dbReference>
<dbReference type="GO" id="GO:0005829">
    <property type="term" value="C:cytosol"/>
    <property type="evidence" value="ECO:0007669"/>
    <property type="project" value="TreeGrafter"/>
</dbReference>
<dbReference type="GO" id="GO:0004853">
    <property type="term" value="F:uroporphyrinogen decarboxylase activity"/>
    <property type="evidence" value="ECO:0007669"/>
    <property type="project" value="UniProtKB-UniRule"/>
</dbReference>
<dbReference type="GO" id="GO:0019353">
    <property type="term" value="P:protoporphyrinogen IX biosynthetic process from glutamate"/>
    <property type="evidence" value="ECO:0007669"/>
    <property type="project" value="TreeGrafter"/>
</dbReference>
<dbReference type="CDD" id="cd00717">
    <property type="entry name" value="URO-D"/>
    <property type="match status" value="1"/>
</dbReference>
<dbReference type="FunFam" id="3.20.20.210:FF:000001">
    <property type="entry name" value="Uroporphyrinogen decarboxylase"/>
    <property type="match status" value="1"/>
</dbReference>
<dbReference type="Gene3D" id="3.20.20.210">
    <property type="match status" value="1"/>
</dbReference>
<dbReference type="HAMAP" id="MF_00218">
    <property type="entry name" value="URO_D"/>
    <property type="match status" value="1"/>
</dbReference>
<dbReference type="InterPro" id="IPR038071">
    <property type="entry name" value="UROD/MetE-like_sf"/>
</dbReference>
<dbReference type="InterPro" id="IPR006361">
    <property type="entry name" value="Uroporphyrinogen_deCO2ase_HemE"/>
</dbReference>
<dbReference type="InterPro" id="IPR000257">
    <property type="entry name" value="Uroporphyrinogen_deCOase"/>
</dbReference>
<dbReference type="NCBIfam" id="TIGR01464">
    <property type="entry name" value="hemE"/>
    <property type="match status" value="1"/>
</dbReference>
<dbReference type="PANTHER" id="PTHR21091">
    <property type="entry name" value="METHYLTETRAHYDROFOLATE:HOMOCYSTEINE METHYLTRANSFERASE RELATED"/>
    <property type="match status" value="1"/>
</dbReference>
<dbReference type="PANTHER" id="PTHR21091:SF169">
    <property type="entry name" value="UROPORPHYRINOGEN DECARBOXYLASE"/>
    <property type="match status" value="1"/>
</dbReference>
<dbReference type="Pfam" id="PF01208">
    <property type="entry name" value="URO-D"/>
    <property type="match status" value="1"/>
</dbReference>
<dbReference type="SUPFAM" id="SSF51726">
    <property type="entry name" value="UROD/MetE-like"/>
    <property type="match status" value="1"/>
</dbReference>
<dbReference type="PROSITE" id="PS00906">
    <property type="entry name" value="UROD_1"/>
    <property type="match status" value="1"/>
</dbReference>
<dbReference type="PROSITE" id="PS00907">
    <property type="entry name" value="UROD_2"/>
    <property type="match status" value="1"/>
</dbReference>
<gene>
    <name evidence="1" type="primary">hemE</name>
    <name type="ordered locus">HEAR3386</name>
</gene>
<evidence type="ECO:0000255" key="1">
    <source>
        <dbReference type="HAMAP-Rule" id="MF_00218"/>
    </source>
</evidence>
<reference key="1">
    <citation type="journal article" date="2007" name="PLoS Genet.">
        <title>A tale of two oxidation states: bacterial colonization of arsenic-rich environments.</title>
        <authorList>
            <person name="Muller D."/>
            <person name="Medigue C."/>
            <person name="Koechler S."/>
            <person name="Barbe V."/>
            <person name="Barakat M."/>
            <person name="Talla E."/>
            <person name="Bonnefoy V."/>
            <person name="Krin E."/>
            <person name="Arsene-Ploetze F."/>
            <person name="Carapito C."/>
            <person name="Chandler M."/>
            <person name="Cournoyer B."/>
            <person name="Cruveiller S."/>
            <person name="Dossat C."/>
            <person name="Duval S."/>
            <person name="Heymann M."/>
            <person name="Leize E."/>
            <person name="Lieutaud A."/>
            <person name="Lievremont D."/>
            <person name="Makita Y."/>
            <person name="Mangenot S."/>
            <person name="Nitschke W."/>
            <person name="Ortet P."/>
            <person name="Perdrial N."/>
            <person name="Schoepp B."/>
            <person name="Siguier P."/>
            <person name="Simeonova D.D."/>
            <person name="Rouy Z."/>
            <person name="Segurens B."/>
            <person name="Turlin E."/>
            <person name="Vallenet D."/>
            <person name="van Dorsselaer A."/>
            <person name="Weiss S."/>
            <person name="Weissenbach J."/>
            <person name="Lett M.-C."/>
            <person name="Danchin A."/>
            <person name="Bertin P.N."/>
        </authorList>
    </citation>
    <scope>NUCLEOTIDE SEQUENCE [LARGE SCALE GENOMIC DNA]</scope>
    <source>
        <strain>ULPAs1</strain>
    </source>
</reference>
<accession>A4GAF0</accession>
<sequence>MPTPFAPLKNDTFLRALLRQPTDYTPMWMMRQAGRYLPEYRATRTRAGSFLGLAKNPDYATEVTLQPLDRYDLDAAILFSDILTVPDAMGLGLYFVDGEGPKFERPLRDEKAVQALKVPELDSLQYVFDAVTQIRTELKGRVPLIGFSGSPWTLACYMVEGGGSDDFRTVKAMLYNRPDLMHHILQTNAITVAAYLNAQIDAGAQAVMMFDTWGGALADGIYQQFSLHYMREVMKHVKTEKEGVRIPSIVFTKGGGLWLNEIADVGADAVGLDWTVNLGAARAQVGDRVALQGNLDPSILFAQPEQIRTEVEKVLMSFGKHAPGSGHVFNLGHGISQFTPPESVSVLVDAVHELSRSLHA</sequence>
<feature type="chain" id="PRO_0000325654" description="Uroporphyrinogen decarboxylase">
    <location>
        <begin position="1"/>
        <end position="360"/>
    </location>
</feature>
<feature type="binding site" evidence="1">
    <location>
        <begin position="31"/>
        <end position="35"/>
    </location>
    <ligand>
        <name>substrate</name>
    </ligand>
</feature>
<feature type="binding site" evidence="1">
    <location>
        <position position="81"/>
    </location>
    <ligand>
        <name>substrate</name>
    </ligand>
</feature>
<feature type="binding site" evidence="1">
    <location>
        <position position="157"/>
    </location>
    <ligand>
        <name>substrate</name>
    </ligand>
</feature>
<feature type="binding site" evidence="1">
    <location>
        <position position="212"/>
    </location>
    <ligand>
        <name>substrate</name>
    </ligand>
</feature>
<feature type="binding site" evidence="1">
    <location>
        <position position="333"/>
    </location>
    <ligand>
        <name>substrate</name>
    </ligand>
</feature>
<feature type="site" description="Transition state stabilizer" evidence="1">
    <location>
        <position position="81"/>
    </location>
</feature>
<comment type="function">
    <text evidence="1">Catalyzes the decarboxylation of four acetate groups of uroporphyrinogen-III to yield coproporphyrinogen-III.</text>
</comment>
<comment type="catalytic activity">
    <reaction evidence="1">
        <text>uroporphyrinogen III + 4 H(+) = coproporphyrinogen III + 4 CO2</text>
        <dbReference type="Rhea" id="RHEA:19865"/>
        <dbReference type="ChEBI" id="CHEBI:15378"/>
        <dbReference type="ChEBI" id="CHEBI:16526"/>
        <dbReference type="ChEBI" id="CHEBI:57308"/>
        <dbReference type="ChEBI" id="CHEBI:57309"/>
        <dbReference type="EC" id="4.1.1.37"/>
    </reaction>
</comment>
<comment type="pathway">
    <text evidence="1">Porphyrin-containing compound metabolism; protoporphyrin-IX biosynthesis; coproporphyrinogen-III from 5-aminolevulinate: step 4/4.</text>
</comment>
<comment type="subunit">
    <text evidence="1">Homodimer.</text>
</comment>
<comment type="subcellular location">
    <subcellularLocation>
        <location evidence="1">Cytoplasm</location>
    </subcellularLocation>
</comment>
<comment type="similarity">
    <text evidence="1">Belongs to the uroporphyrinogen decarboxylase family.</text>
</comment>